<accession>P00344</accession>
<proteinExistence type="evidence at protein level"/>
<comment type="function">
    <text evidence="1 4 5">Catalyzes the conversion of lactate to pyruvate.</text>
</comment>
<comment type="catalytic activity">
    <reaction evidence="1 9">
        <text>(S)-lactate + NAD(+) = pyruvate + NADH + H(+)</text>
        <dbReference type="Rhea" id="RHEA:23444"/>
        <dbReference type="ChEBI" id="CHEBI:15361"/>
        <dbReference type="ChEBI" id="CHEBI:15378"/>
        <dbReference type="ChEBI" id="CHEBI:16651"/>
        <dbReference type="ChEBI" id="CHEBI:57540"/>
        <dbReference type="ChEBI" id="CHEBI:57945"/>
        <dbReference type="EC" id="1.1.1.27"/>
    </reaction>
</comment>
<comment type="activity regulation">
    <text evidence="4 5 8">Allosterically activated by fructose 1,6-bisphosphate (FBP). The improvement in affinity for substrate occurs in two steps; the binding of fructose 1,6-bisphosphate (FBP) to the dimer, and the dimer to tetramer conversion.</text>
</comment>
<comment type="pathway">
    <text evidence="1">Fermentation; pyruvate fermentation to lactate; (S)-lactate from pyruvate: step 1/1.</text>
</comment>
<comment type="subunit">
    <text evidence="2 3 4 10">Exists as a dimer and a tetramer (dimer of dimers). The conversion occurs via the binding of fructose 1,6-bisphosphate (FBP) to the dimer.</text>
</comment>
<comment type="subcellular location">
    <subcellularLocation>
        <location evidence="1">Cytoplasm</location>
    </subcellularLocation>
</comment>
<comment type="similarity">
    <text evidence="1 7">Belongs to the LDH/MDH superfamily. LDH family.</text>
</comment>
<protein>
    <recommendedName>
        <fullName evidence="1 6">L-lactate dehydrogenase</fullName>
        <shortName evidence="1 6">L-LDH</shortName>
        <ecNumber evidence="1 9">1.1.1.27</ecNumber>
    </recommendedName>
</protein>
<evidence type="ECO:0000255" key="1">
    <source>
        <dbReference type="HAMAP-Rule" id="MF_00488"/>
    </source>
</evidence>
<evidence type="ECO:0000269" key="2">
    <source>
    </source>
</evidence>
<evidence type="ECO:0000269" key="3">
    <source>
    </source>
</evidence>
<evidence type="ECO:0000269" key="4">
    <source>
    </source>
</evidence>
<evidence type="ECO:0000269" key="5">
    <source ref="5"/>
</evidence>
<evidence type="ECO:0000303" key="6">
    <source>
    </source>
</evidence>
<evidence type="ECO:0000305" key="7"/>
<evidence type="ECO:0000305" key="8">
    <source>
    </source>
</evidence>
<evidence type="ECO:0000305" key="9">
    <source>
    </source>
</evidence>
<evidence type="ECO:0000305" key="10">
    <source ref="5"/>
</evidence>
<evidence type="ECO:0007744" key="11">
    <source>
        <dbReference type="PDB" id="1LDN"/>
    </source>
</evidence>
<evidence type="ECO:0007744" key="12">
    <source>
        <dbReference type="PDB" id="2LDB"/>
    </source>
</evidence>
<evidence type="ECO:0007829" key="13">
    <source>
        <dbReference type="PDB" id="1LDB"/>
    </source>
</evidence>
<evidence type="ECO:0007829" key="14">
    <source>
        <dbReference type="PDB" id="1LDN"/>
    </source>
</evidence>
<evidence type="ECO:0007829" key="15">
    <source>
        <dbReference type="PDB" id="2LDB"/>
    </source>
</evidence>
<dbReference type="EC" id="1.1.1.27" evidence="1 9"/>
<dbReference type="EMBL" id="M14788">
    <property type="protein sequence ID" value="AAA22568.1"/>
    <property type="molecule type" value="Genomic_DNA"/>
</dbReference>
<dbReference type="EMBL" id="M19396">
    <property type="protein sequence ID" value="AAA22567.1"/>
    <property type="molecule type" value="Genomic_DNA"/>
</dbReference>
<dbReference type="PIR" id="A26053">
    <property type="entry name" value="DEBSLF"/>
</dbReference>
<dbReference type="RefSeq" id="WP_033016716.1">
    <property type="nucleotide sequence ID" value="NZ_RCTK01000052.1"/>
</dbReference>
<dbReference type="PDB" id="1LDB">
    <property type="method" value="X-ray"/>
    <property type="resolution" value="2.80 A"/>
    <property type="chains" value="A/B/C/D=1-317"/>
</dbReference>
<dbReference type="PDB" id="1LDN">
    <property type="method" value="X-ray"/>
    <property type="resolution" value="2.50 A"/>
    <property type="chains" value="A/B/C/D/E/F/G/H=1-316"/>
</dbReference>
<dbReference type="PDB" id="2LDB">
    <property type="method" value="X-ray"/>
    <property type="resolution" value="3.00 A"/>
    <property type="chains" value="A/B/C/D=1-317"/>
</dbReference>
<dbReference type="PDBsum" id="1LDB"/>
<dbReference type="PDBsum" id="1LDN"/>
<dbReference type="PDBsum" id="2LDB"/>
<dbReference type="SMR" id="P00344"/>
<dbReference type="OrthoDB" id="9802969at2"/>
<dbReference type="BRENDA" id="1.1.1.27">
    <property type="organism ID" value="623"/>
</dbReference>
<dbReference type="SABIO-RK" id="P00344"/>
<dbReference type="UniPathway" id="UPA00554">
    <property type="reaction ID" value="UER00611"/>
</dbReference>
<dbReference type="EvolutionaryTrace" id="P00344"/>
<dbReference type="GO" id="GO:0005737">
    <property type="term" value="C:cytoplasm"/>
    <property type="evidence" value="ECO:0007669"/>
    <property type="project" value="UniProtKB-SubCell"/>
</dbReference>
<dbReference type="GO" id="GO:0004459">
    <property type="term" value="F:L-lactate dehydrogenase activity"/>
    <property type="evidence" value="ECO:0000314"/>
    <property type="project" value="UniProtKB"/>
</dbReference>
<dbReference type="GO" id="GO:0051287">
    <property type="term" value="F:NAD binding"/>
    <property type="evidence" value="ECO:0000314"/>
    <property type="project" value="UniProtKB"/>
</dbReference>
<dbReference type="GO" id="GO:0006096">
    <property type="term" value="P:glycolytic process"/>
    <property type="evidence" value="ECO:0007669"/>
    <property type="project" value="UniProtKB-UniRule"/>
</dbReference>
<dbReference type="GO" id="GO:0006089">
    <property type="term" value="P:lactate metabolic process"/>
    <property type="evidence" value="ECO:0007669"/>
    <property type="project" value="TreeGrafter"/>
</dbReference>
<dbReference type="CDD" id="cd05291">
    <property type="entry name" value="HicDH_like"/>
    <property type="match status" value="1"/>
</dbReference>
<dbReference type="FunFam" id="3.90.110.10:FF:000005">
    <property type="entry name" value="L-lactate dehydrogenase"/>
    <property type="match status" value="1"/>
</dbReference>
<dbReference type="FunFam" id="3.40.50.720:FF:000018">
    <property type="entry name" value="Malate dehydrogenase"/>
    <property type="match status" value="1"/>
</dbReference>
<dbReference type="Gene3D" id="3.90.110.10">
    <property type="entry name" value="Lactate dehydrogenase/glycoside hydrolase, family 4, C-terminal"/>
    <property type="match status" value="1"/>
</dbReference>
<dbReference type="Gene3D" id="3.40.50.720">
    <property type="entry name" value="NAD(P)-binding Rossmann-like Domain"/>
    <property type="match status" value="1"/>
</dbReference>
<dbReference type="HAMAP" id="MF_00488">
    <property type="entry name" value="Lactate_dehydrog"/>
    <property type="match status" value="1"/>
</dbReference>
<dbReference type="InterPro" id="IPR001557">
    <property type="entry name" value="L-lactate/malate_DH"/>
</dbReference>
<dbReference type="InterPro" id="IPR011304">
    <property type="entry name" value="L-lactate_DH"/>
</dbReference>
<dbReference type="InterPro" id="IPR018177">
    <property type="entry name" value="L-lactate_DH_AS"/>
</dbReference>
<dbReference type="InterPro" id="IPR022383">
    <property type="entry name" value="Lactate/malate_DH_C"/>
</dbReference>
<dbReference type="InterPro" id="IPR001236">
    <property type="entry name" value="Lactate/malate_DH_N"/>
</dbReference>
<dbReference type="InterPro" id="IPR015955">
    <property type="entry name" value="Lactate_DH/Glyco_Ohase_4_C"/>
</dbReference>
<dbReference type="InterPro" id="IPR036291">
    <property type="entry name" value="NAD(P)-bd_dom_sf"/>
</dbReference>
<dbReference type="NCBIfam" id="TIGR01771">
    <property type="entry name" value="L-LDH-NAD"/>
    <property type="match status" value="1"/>
</dbReference>
<dbReference type="NCBIfam" id="NF000824">
    <property type="entry name" value="PRK00066.1"/>
    <property type="match status" value="1"/>
</dbReference>
<dbReference type="NCBIfam" id="NF004863">
    <property type="entry name" value="PRK06223.1"/>
    <property type="match status" value="1"/>
</dbReference>
<dbReference type="PANTHER" id="PTHR43128">
    <property type="entry name" value="L-2-HYDROXYCARBOXYLATE DEHYDROGENASE (NAD(P)(+))"/>
    <property type="match status" value="1"/>
</dbReference>
<dbReference type="PANTHER" id="PTHR43128:SF16">
    <property type="entry name" value="L-LACTATE DEHYDROGENASE"/>
    <property type="match status" value="1"/>
</dbReference>
<dbReference type="Pfam" id="PF02866">
    <property type="entry name" value="Ldh_1_C"/>
    <property type="match status" value="1"/>
</dbReference>
<dbReference type="Pfam" id="PF00056">
    <property type="entry name" value="Ldh_1_N"/>
    <property type="match status" value="1"/>
</dbReference>
<dbReference type="PIRSF" id="PIRSF000102">
    <property type="entry name" value="Lac_mal_DH"/>
    <property type="match status" value="1"/>
</dbReference>
<dbReference type="PRINTS" id="PR00086">
    <property type="entry name" value="LLDHDRGNASE"/>
</dbReference>
<dbReference type="SUPFAM" id="SSF56327">
    <property type="entry name" value="LDH C-terminal domain-like"/>
    <property type="match status" value="1"/>
</dbReference>
<dbReference type="SUPFAM" id="SSF51735">
    <property type="entry name" value="NAD(P)-binding Rossmann-fold domains"/>
    <property type="match status" value="1"/>
</dbReference>
<dbReference type="PROSITE" id="PS00064">
    <property type="entry name" value="L_LDH"/>
    <property type="match status" value="1"/>
</dbReference>
<feature type="chain" id="PRO_0000168328" description="L-lactate dehydrogenase">
    <location>
        <begin position="1"/>
        <end position="317"/>
    </location>
</feature>
<feature type="active site" description="Proton acceptor" evidence="1 8 11">
    <location>
        <position position="179"/>
    </location>
</feature>
<feature type="binding site" evidence="1 2 3 11 12">
    <location>
        <begin position="16"/>
        <end position="17"/>
    </location>
    <ligand>
        <name>NAD(+)</name>
        <dbReference type="ChEBI" id="CHEBI:57540"/>
    </ligand>
</feature>
<feature type="binding site" evidence="1 2 3 11 12">
    <location>
        <position position="38"/>
    </location>
    <ligand>
        <name>NAD(+)</name>
        <dbReference type="ChEBI" id="CHEBI:57540"/>
    </ligand>
</feature>
<feature type="binding site" evidence="1">
    <location>
        <position position="43"/>
    </location>
    <ligand>
        <name>NAD(+)</name>
        <dbReference type="ChEBI" id="CHEBI:57540"/>
    </ligand>
</feature>
<feature type="binding site" evidence="1">
    <location>
        <position position="69"/>
    </location>
    <ligand>
        <name>NAD(+)</name>
        <dbReference type="ChEBI" id="CHEBI:57540"/>
    </ligand>
</feature>
<feature type="binding site" evidence="1">
    <location>
        <begin position="83"/>
        <end position="84"/>
    </location>
    <ligand>
        <name>NAD(+)</name>
        <dbReference type="ChEBI" id="CHEBI:57540"/>
    </ligand>
</feature>
<feature type="binding site" evidence="1">
    <location>
        <position position="86"/>
    </location>
    <ligand>
        <name>substrate</name>
    </ligand>
</feature>
<feature type="binding site" evidence="1 8 11">
    <location>
        <position position="92"/>
    </location>
    <ligand>
        <name>substrate</name>
    </ligand>
</feature>
<feature type="binding site" evidence="1">
    <location>
        <position position="105"/>
    </location>
    <ligand>
        <name>NAD(+)</name>
        <dbReference type="ChEBI" id="CHEBI:57540"/>
    </ligand>
</feature>
<feature type="binding site" evidence="1 2 3 11 12">
    <location>
        <begin position="122"/>
        <end position="124"/>
    </location>
    <ligand>
        <name>NAD(+)</name>
        <dbReference type="ChEBI" id="CHEBI:57540"/>
    </ligand>
</feature>
<feature type="binding site" evidence="1">
    <location>
        <begin position="124"/>
        <end position="127"/>
    </location>
    <ligand>
        <name>substrate</name>
    </ligand>
</feature>
<feature type="binding site" evidence="2 3 11 12">
    <location>
        <position position="147"/>
    </location>
    <ligand>
        <name>NAD(+)</name>
        <dbReference type="ChEBI" id="CHEBI:57540"/>
    </ligand>
</feature>
<feature type="binding site" evidence="1 8 11">
    <location>
        <begin position="152"/>
        <end position="155"/>
    </location>
    <ligand>
        <name>substrate</name>
    </ligand>
</feature>
<feature type="binding site" evidence="1 3 12">
    <location>
        <position position="157"/>
    </location>
    <ligand>
        <name>beta-D-fructose 1,6-bisphosphate</name>
        <dbReference type="ChEBI" id="CHEBI:32966"/>
        <note>allosteric activator</note>
    </ligand>
</feature>
<feature type="binding site" evidence="2 3 11 12">
    <location>
        <begin position="169"/>
        <end position="172"/>
    </location>
    <ligand>
        <name>beta-D-fructose 1,6-bisphosphate</name>
        <dbReference type="ChEBI" id="CHEBI:32966"/>
        <note>allosteric activator</note>
    </ligand>
</feature>
<feature type="binding site" evidence="1 8 11">
    <location>
        <position position="233"/>
    </location>
    <ligand>
        <name>substrate</name>
    </ligand>
</feature>
<feature type="modified residue" description="Phosphotyrosine" evidence="1">
    <location>
        <position position="224"/>
    </location>
</feature>
<feature type="mutagenesis site" description="This mutant undergoes a reversible subunit assembly from dimer to tetramer. However, the tetramer mutant is much more stable than the wild type, and is destabilized rather than stabilized by binding the allosteric regulator, fructose 1,6-bisphosphate (FBP). The mutation weakens the binding of fructose 1,6-bisphosphate (FBP) to both the dimeric and tetrameric forms, and almost abolishes any stimulatory effect." evidence="4">
    <original>R</original>
    <variation>Q</variation>
    <location>
        <position position="157"/>
    </location>
</feature>
<feature type="sequence conflict" description="In Ref. 2; AAA22567." evidence="7" ref="2">
    <original>S</original>
    <variation>H</variation>
    <location>
        <position position="113"/>
    </location>
</feature>
<feature type="turn" evidence="14">
    <location>
        <begin position="2"/>
        <end position="5"/>
    </location>
</feature>
<feature type="strand" evidence="14">
    <location>
        <begin position="8"/>
        <end position="12"/>
    </location>
</feature>
<feature type="helix" evidence="14">
    <location>
        <begin position="16"/>
        <end position="28"/>
    </location>
</feature>
<feature type="strand" evidence="14">
    <location>
        <begin position="32"/>
        <end position="37"/>
    </location>
</feature>
<feature type="helix" evidence="14">
    <location>
        <begin position="41"/>
        <end position="54"/>
    </location>
</feature>
<feature type="strand" evidence="14">
    <location>
        <begin position="57"/>
        <end position="60"/>
    </location>
</feature>
<feature type="strand" evidence="14">
    <location>
        <begin position="63"/>
        <end position="66"/>
    </location>
</feature>
<feature type="helix" evidence="14">
    <location>
        <begin position="69"/>
        <end position="71"/>
    </location>
</feature>
<feature type="turn" evidence="14">
    <location>
        <begin position="72"/>
        <end position="74"/>
    </location>
</feature>
<feature type="strand" evidence="14">
    <location>
        <begin position="76"/>
        <end position="80"/>
    </location>
</feature>
<feature type="turn" evidence="14">
    <location>
        <begin position="88"/>
        <end position="90"/>
    </location>
</feature>
<feature type="helix" evidence="14">
    <location>
        <begin position="93"/>
        <end position="95"/>
    </location>
</feature>
<feature type="helix" evidence="14">
    <location>
        <begin position="96"/>
        <end position="113"/>
    </location>
</feature>
<feature type="strand" evidence="14">
    <location>
        <begin position="117"/>
        <end position="121"/>
    </location>
</feature>
<feature type="strand" evidence="14">
    <location>
        <begin position="123"/>
        <end position="125"/>
    </location>
</feature>
<feature type="helix" evidence="14">
    <location>
        <begin position="126"/>
        <end position="137"/>
    </location>
</feature>
<feature type="helix" evidence="14">
    <location>
        <begin position="141"/>
        <end position="143"/>
    </location>
</feature>
<feature type="strand" evidence="14">
    <location>
        <begin position="144"/>
        <end position="146"/>
    </location>
</feature>
<feature type="helix" evidence="14">
    <location>
        <begin position="150"/>
        <end position="164"/>
    </location>
</feature>
<feature type="helix" evidence="14">
    <location>
        <begin position="168"/>
        <end position="170"/>
    </location>
</feature>
<feature type="strand" evidence="14">
    <location>
        <begin position="171"/>
        <end position="177"/>
    </location>
</feature>
<feature type="turn" evidence="13">
    <location>
        <begin position="179"/>
        <end position="182"/>
    </location>
</feature>
<feature type="strand" evidence="14">
    <location>
        <begin position="184"/>
        <end position="192"/>
    </location>
</feature>
<feature type="strand" evidence="14">
    <location>
        <begin position="195"/>
        <end position="197"/>
    </location>
</feature>
<feature type="helix" evidence="14">
    <location>
        <begin position="202"/>
        <end position="204"/>
    </location>
</feature>
<feature type="turn" evidence="14">
    <location>
        <begin position="205"/>
        <end position="207"/>
    </location>
</feature>
<feature type="helix" evidence="14">
    <location>
        <begin position="208"/>
        <end position="230"/>
    </location>
</feature>
<feature type="helix" evidence="14">
    <location>
        <begin position="235"/>
        <end position="249"/>
    </location>
</feature>
<feature type="strand" evidence="14">
    <location>
        <begin position="254"/>
        <end position="264"/>
    </location>
</feature>
<feature type="helix" evidence="15">
    <location>
        <begin position="265"/>
        <end position="267"/>
    </location>
</feature>
<feature type="strand" evidence="14">
    <location>
        <begin position="269"/>
        <end position="280"/>
    </location>
</feature>
<feature type="strand" evidence="14">
    <location>
        <begin position="283"/>
        <end position="287"/>
    </location>
</feature>
<feature type="helix" evidence="14">
    <location>
        <begin position="294"/>
        <end position="313"/>
    </location>
</feature>
<name>LDH_GEOSE</name>
<gene>
    <name evidence="1 6" type="primary">ldh</name>
    <name type="synonym">lct</name>
</gene>
<keyword id="KW-0002">3D-structure</keyword>
<keyword id="KW-0021">Allosteric enzyme</keyword>
<keyword id="KW-0963">Cytoplasm</keyword>
<keyword id="KW-0903">Direct protein sequencing</keyword>
<keyword id="KW-0520">NAD</keyword>
<keyword id="KW-0560">Oxidoreductase</keyword>
<keyword id="KW-0597">Phosphoprotein</keyword>
<organism>
    <name type="scientific">Geobacillus stearothermophilus</name>
    <name type="common">Bacillus stearothermophilus</name>
    <dbReference type="NCBI Taxonomy" id="1422"/>
    <lineage>
        <taxon>Bacteria</taxon>
        <taxon>Bacillati</taxon>
        <taxon>Bacillota</taxon>
        <taxon>Bacilli</taxon>
        <taxon>Bacillales</taxon>
        <taxon>Anoxybacillaceae</taxon>
        <taxon>Geobacillus</taxon>
    </lineage>
</organism>
<reference key="1">
    <citation type="journal article" date="1986" name="Gene">
        <title>Cloning, expression and complete nucleotide sequence of the Bacillus stearothermophilus L-lactate dehydrogenase gene.</title>
        <authorList>
            <person name="Barstow D.A."/>
            <person name="Clarke A.R."/>
            <person name="Chia W.N."/>
            <person name="Wigley D."/>
            <person name="Sharman A.F."/>
            <person name="Holbrook J.J."/>
            <person name="Atkinson T."/>
            <person name="Minton N.P."/>
        </authorList>
    </citation>
    <scope>NUCLEOTIDE SEQUENCE [GENOMIC DNA]</scope>
</reference>
<reference key="2">
    <citation type="journal article" date="1987" name="Biol. Chem. Hoppe-Seyler">
        <title>Structure and function of L-lactate dehydrogenases from thermophilic and mesophilic bacteria, VI. Nucleotide sequences of lactate dehydrogenase genes from the thermophilic bacteria Bacillus stearothermophilus, B. caldolyticus and B. caldotenax.</title>
        <authorList>
            <person name="Zuelli F."/>
            <person name="Weber H."/>
            <person name="Zuber H."/>
        </authorList>
    </citation>
    <scope>NUCLEOTIDE SEQUENCE [GENOMIC DNA]</scope>
</reference>
<reference key="3">
    <citation type="journal article" date="1983" name="Hoppe-Seyler's Z. Physiol. Chem.">
        <title>Structure and function of L-lactate dehydrogenases from thermophilic and mesophilic bacteria. II) The primary structure of thermophilic lactate dehydrogenase from Bacillus stearothermophilus. Cyanogen bromide fragments and partial sequence.</title>
        <authorList>
            <person name="Tratschin J.D."/>
            <person name="Wirz B."/>
            <person name="Frank G."/>
            <person name="Zuber H."/>
        </authorList>
    </citation>
    <scope>PARTIAL PROTEIN SEQUENCE</scope>
    <source>
        <strain>ATCC 29609 / DSM 2027 / NCA 1503 / NCIMB 8924</strain>
    </source>
</reference>
<reference key="4">
    <citation type="journal article" date="1983" name="Hoppe-Seyler's Z. Physiol. Chem.">
        <title>Structure and function of L-lactate dehydrogenases from thermophilic and mesophilic bacteria. III) The primary structure of thermophilic lactate dehydrogenase from Bacillus stearothermophilus. Hydroxylamine-, o-iodosobenzoic acid- and tryptic-fragments. The complete amino-acid sequence.</title>
        <authorList>
            <person name="Wirz B."/>
            <person name="Suter F."/>
            <person name="Zuber H."/>
        </authorList>
    </citation>
    <scope>PARTIAL PROTEIN SEQUENCE</scope>
    <source>
        <strain>ATCC 29609 / DSM 2027 / NCA 1503 / NCIMB 8924</strain>
    </source>
</reference>
<reference key="5">
    <citation type="journal article" date="1985" name="Biochim. Biophys. Acta">
        <title>The assembly mechanism of the lactate dehydrogenase tetramer from Bacillus stearothermophilus; the equilibrium relationships between quaternary structure and the binding of fructose 1,6-biphosphate, NADH and oxamate.</title>
        <authorList>
            <person name="Clarke A.R."/>
            <person name="Atkinson T."/>
            <person name="Campbell J.W."/>
            <person name="Holbrook J.J."/>
        </authorList>
    </citation>
    <scope>FUNCTION</scope>
    <scope>ACTIVITY REGULATION</scope>
    <scope>SUBUNIT</scope>
</reference>
<reference key="6">
    <citation type="journal article" date="1987" name="Biochim. Biophys. Acta">
        <title>A single amino acid substitution deregulates a bacterial lactate dehydrogenase and stabilizes its tetrameric structure.</title>
        <authorList>
            <person name="Clarke A.R."/>
            <person name="Wigley D.B."/>
            <person name="Barstow D.A."/>
            <person name="Chia W.N."/>
            <person name="Atkinson T."/>
            <person name="Holbrook J.J."/>
        </authorList>
    </citation>
    <scope>FUNCTION</scope>
    <scope>CATALYTIC ACTIVITY</scope>
    <scope>ACTIVITY REGULATION</scope>
    <scope>MUTAGENESIS OF ARG-157</scope>
    <scope>SUBUNIT</scope>
</reference>
<reference key="7">
    <citation type="journal article" date="1990" name="Proteins">
        <title>Structure determination and refinement of Bacillus stearothermophilus lactate dehydrogenase.</title>
        <authorList>
            <person name="Piontek K."/>
            <person name="Chakrabarti P."/>
            <person name="Schar H.P."/>
            <person name="Rossmann M.G."/>
            <person name="Zuber H."/>
        </authorList>
    </citation>
    <scope>X-RAY CRYSTALLOGRAPHY (2.80 ANGSTROMS) IN COMPLEX WITH NAD AND FRUCTOSE 1,6-BISPHOSPHATE</scope>
    <scope>SUBUNIT</scope>
</reference>
<reference key="8">
    <citation type="journal article" date="1992" name="J. Mol. Biol.">
        <title>Structure of a ternary complex of an allosteric lactate dehydrogenase from Bacillus stearothermophilus at 2.5-A resolution.</title>
        <authorList>
            <person name="Wigley D.B."/>
            <person name="Gamblin S.J."/>
            <person name="Turkenburg J.P."/>
            <person name="Dodson E.J."/>
            <person name="Piontek K."/>
            <person name="Muirhead H."/>
            <person name="Holbrook J.J."/>
        </authorList>
    </citation>
    <scope>X-RAY CRYSTALLOGRAPHY (2.5 ANGSTROMS) IN COMPLEX WITH NAD; FRUCTOSE 1,6-BISPHOSPHATE AND SUBSTRATE ANALOG</scope>
    <scope>ACTIVITY REGULATION</scope>
    <scope>ACTIVE SITE</scope>
    <scope>SUBUNIT</scope>
</reference>
<sequence>MKNNGGARVVVIGAGFVGASYVFALMNQGIADEIVLIDANESKAIGDAMDFNHGKVFAPKPVDIWHGDYDDCRDADLVVICAGANQKPGETRLDLVDKNIAIFRSIVESVMASGFQGLFLVATNPVDILTYATWKFSGLPHERVIGSGTILDTARFRFLLGEYFSVAPQNVHAYIIGEHGDTELPVWSQAYIGVMPIRKLVESKGEEAQKDLERIFVNVRDAAYQIIEKKGATYYGIAMGLARVTRAILHNENAILTVSAYLDGLYGERDVYIGVPAVINRNGIREVIEIELNDDEKNRFHHSAATLKSVLARAFTR</sequence>